<proteinExistence type="predicted"/>
<evidence type="ECO:0000305" key="1"/>
<gene>
    <name type="primary">ycgB</name>
    <name type="ordered locus">BSU03030</name>
</gene>
<dbReference type="EMBL" id="D50453">
    <property type="protein sequence ID" value="BAA08937.1"/>
    <property type="molecule type" value="Genomic_DNA"/>
</dbReference>
<dbReference type="EMBL" id="AL009126">
    <property type="protein sequence ID" value="CAB12097.2"/>
    <property type="molecule type" value="Genomic_DNA"/>
</dbReference>
<dbReference type="PIR" id="G69757">
    <property type="entry name" value="G69757"/>
</dbReference>
<dbReference type="RefSeq" id="NP_388185.2">
    <property type="nucleotide sequence ID" value="NC_000964.3"/>
</dbReference>
<dbReference type="RefSeq" id="WP_003246445.1">
    <property type="nucleotide sequence ID" value="NZ_OZ025638.1"/>
</dbReference>
<dbReference type="FunCoup" id="P55909">
    <property type="interactions" value="7"/>
</dbReference>
<dbReference type="STRING" id="224308.BSU03030"/>
<dbReference type="PaxDb" id="224308-BSU03030"/>
<dbReference type="EnsemblBacteria" id="CAB12097">
    <property type="protein sequence ID" value="CAB12097"/>
    <property type="gene ID" value="BSU_03030"/>
</dbReference>
<dbReference type="GeneID" id="938355"/>
<dbReference type="KEGG" id="bsu:BSU03030"/>
<dbReference type="PATRIC" id="fig|224308.179.peg.316"/>
<dbReference type="eggNOG" id="ENOG502ZNZI">
    <property type="taxonomic scope" value="Bacteria"/>
</dbReference>
<dbReference type="InParanoid" id="P55909"/>
<dbReference type="OrthoDB" id="2915507at2"/>
<dbReference type="BioCyc" id="BSUB:BSU03030-MONOMER"/>
<dbReference type="Proteomes" id="UP000001570">
    <property type="component" value="Chromosome"/>
</dbReference>
<dbReference type="InterPro" id="IPR046664">
    <property type="entry name" value="DUF6773"/>
</dbReference>
<dbReference type="Pfam" id="PF20563">
    <property type="entry name" value="DUF6773"/>
    <property type="match status" value="1"/>
</dbReference>
<sequence>MNNLRNRLSGVNGKNKRVKEKEQKIWSEIGMIAGAFALLDVIIRGIMFEFPFKEWAASLVFLFIIILYYCIRAAASGMLMPRIDTKEELQKRVKQQRIESIAVAFAVVVLTMYDRGIPHTFFAWLKMILLFIVCGGVLFLLRYVIVKLAYRRAVKEEIKKKSSFLFGKRGKRSQFRAAFFIGTLICIHSAKLF</sequence>
<organism>
    <name type="scientific">Bacillus subtilis (strain 168)</name>
    <dbReference type="NCBI Taxonomy" id="224308"/>
    <lineage>
        <taxon>Bacteria</taxon>
        <taxon>Bacillati</taxon>
        <taxon>Bacillota</taxon>
        <taxon>Bacilli</taxon>
        <taxon>Bacillales</taxon>
        <taxon>Bacillaceae</taxon>
        <taxon>Bacillus</taxon>
    </lineage>
</organism>
<name>YCGB_BACSU</name>
<reference key="1">
    <citation type="journal article" date="1996" name="Microbiology">
        <title>The 25 degrees-36 degrees region of the Bacillus subtilis chromosome: determination of the sequence of a 146 kb segment and identification of 113 genes.</title>
        <authorList>
            <person name="Yamane K."/>
            <person name="Kumano M."/>
            <person name="Kurita K."/>
        </authorList>
    </citation>
    <scope>NUCLEOTIDE SEQUENCE [GENOMIC DNA]</scope>
    <source>
        <strain>168</strain>
    </source>
</reference>
<reference key="2">
    <citation type="journal article" date="1997" name="Nature">
        <title>The complete genome sequence of the Gram-positive bacterium Bacillus subtilis.</title>
        <authorList>
            <person name="Kunst F."/>
            <person name="Ogasawara N."/>
            <person name="Moszer I."/>
            <person name="Albertini A.M."/>
            <person name="Alloni G."/>
            <person name="Azevedo V."/>
            <person name="Bertero M.G."/>
            <person name="Bessieres P."/>
            <person name="Bolotin A."/>
            <person name="Borchert S."/>
            <person name="Borriss R."/>
            <person name="Boursier L."/>
            <person name="Brans A."/>
            <person name="Braun M."/>
            <person name="Brignell S.C."/>
            <person name="Bron S."/>
            <person name="Brouillet S."/>
            <person name="Bruschi C.V."/>
            <person name="Caldwell B."/>
            <person name="Capuano V."/>
            <person name="Carter N.M."/>
            <person name="Choi S.-K."/>
            <person name="Codani J.-J."/>
            <person name="Connerton I.F."/>
            <person name="Cummings N.J."/>
            <person name="Daniel R.A."/>
            <person name="Denizot F."/>
            <person name="Devine K.M."/>
            <person name="Duesterhoeft A."/>
            <person name="Ehrlich S.D."/>
            <person name="Emmerson P.T."/>
            <person name="Entian K.-D."/>
            <person name="Errington J."/>
            <person name="Fabret C."/>
            <person name="Ferrari E."/>
            <person name="Foulger D."/>
            <person name="Fritz C."/>
            <person name="Fujita M."/>
            <person name="Fujita Y."/>
            <person name="Fuma S."/>
            <person name="Galizzi A."/>
            <person name="Galleron N."/>
            <person name="Ghim S.-Y."/>
            <person name="Glaser P."/>
            <person name="Goffeau A."/>
            <person name="Golightly E.J."/>
            <person name="Grandi G."/>
            <person name="Guiseppi G."/>
            <person name="Guy B.J."/>
            <person name="Haga K."/>
            <person name="Haiech J."/>
            <person name="Harwood C.R."/>
            <person name="Henaut A."/>
            <person name="Hilbert H."/>
            <person name="Holsappel S."/>
            <person name="Hosono S."/>
            <person name="Hullo M.-F."/>
            <person name="Itaya M."/>
            <person name="Jones L.-M."/>
            <person name="Joris B."/>
            <person name="Karamata D."/>
            <person name="Kasahara Y."/>
            <person name="Klaerr-Blanchard M."/>
            <person name="Klein C."/>
            <person name="Kobayashi Y."/>
            <person name="Koetter P."/>
            <person name="Koningstein G."/>
            <person name="Krogh S."/>
            <person name="Kumano M."/>
            <person name="Kurita K."/>
            <person name="Lapidus A."/>
            <person name="Lardinois S."/>
            <person name="Lauber J."/>
            <person name="Lazarevic V."/>
            <person name="Lee S.-M."/>
            <person name="Levine A."/>
            <person name="Liu H."/>
            <person name="Masuda S."/>
            <person name="Mauel C."/>
            <person name="Medigue C."/>
            <person name="Medina N."/>
            <person name="Mellado R.P."/>
            <person name="Mizuno M."/>
            <person name="Moestl D."/>
            <person name="Nakai S."/>
            <person name="Noback M."/>
            <person name="Noone D."/>
            <person name="O'Reilly M."/>
            <person name="Ogawa K."/>
            <person name="Ogiwara A."/>
            <person name="Oudega B."/>
            <person name="Park S.-H."/>
            <person name="Parro V."/>
            <person name="Pohl T.M."/>
            <person name="Portetelle D."/>
            <person name="Porwollik S."/>
            <person name="Prescott A.M."/>
            <person name="Presecan E."/>
            <person name="Pujic P."/>
            <person name="Purnelle B."/>
            <person name="Rapoport G."/>
            <person name="Rey M."/>
            <person name="Reynolds S."/>
            <person name="Rieger M."/>
            <person name="Rivolta C."/>
            <person name="Rocha E."/>
            <person name="Roche B."/>
            <person name="Rose M."/>
            <person name="Sadaie Y."/>
            <person name="Sato T."/>
            <person name="Scanlan E."/>
            <person name="Schleich S."/>
            <person name="Schroeter R."/>
            <person name="Scoffone F."/>
            <person name="Sekiguchi J."/>
            <person name="Sekowska A."/>
            <person name="Seror S.J."/>
            <person name="Serror P."/>
            <person name="Shin B.-S."/>
            <person name="Soldo B."/>
            <person name="Sorokin A."/>
            <person name="Tacconi E."/>
            <person name="Takagi T."/>
            <person name="Takahashi H."/>
            <person name="Takemaru K."/>
            <person name="Takeuchi M."/>
            <person name="Tamakoshi A."/>
            <person name="Tanaka T."/>
            <person name="Terpstra P."/>
            <person name="Tognoni A."/>
            <person name="Tosato V."/>
            <person name="Uchiyama S."/>
            <person name="Vandenbol M."/>
            <person name="Vannier F."/>
            <person name="Vassarotti A."/>
            <person name="Viari A."/>
            <person name="Wambutt R."/>
            <person name="Wedler E."/>
            <person name="Wedler H."/>
            <person name="Weitzenegger T."/>
            <person name="Winters P."/>
            <person name="Wipat A."/>
            <person name="Yamamoto H."/>
            <person name="Yamane K."/>
            <person name="Yasumoto K."/>
            <person name="Yata K."/>
            <person name="Yoshida K."/>
            <person name="Yoshikawa H.-F."/>
            <person name="Zumstein E."/>
            <person name="Yoshikawa H."/>
            <person name="Danchin A."/>
        </authorList>
    </citation>
    <scope>NUCLEOTIDE SEQUENCE [LARGE SCALE GENOMIC DNA]</scope>
    <source>
        <strain>168</strain>
    </source>
</reference>
<reference key="3">
    <citation type="journal article" date="2009" name="Microbiology">
        <title>From a consortium sequence to a unified sequence: the Bacillus subtilis 168 reference genome a decade later.</title>
        <authorList>
            <person name="Barbe V."/>
            <person name="Cruveiller S."/>
            <person name="Kunst F."/>
            <person name="Lenoble P."/>
            <person name="Meurice G."/>
            <person name="Sekowska A."/>
            <person name="Vallenet D."/>
            <person name="Wang T."/>
            <person name="Moszer I."/>
            <person name="Medigue C."/>
            <person name="Danchin A."/>
        </authorList>
    </citation>
    <scope>SEQUENCE REVISION TO 29; 36; 39; 56 AND 103</scope>
</reference>
<protein>
    <recommendedName>
        <fullName>Uncharacterized protein YcgB</fullName>
    </recommendedName>
</protein>
<feature type="chain" id="PRO_0000049476" description="Uncharacterized protein YcgB">
    <location>
        <begin position="1"/>
        <end position="193"/>
    </location>
</feature>
<feature type="sequence conflict" description="In Ref. 1; BAA08937." evidence="1" ref="1">
    <original>I</original>
    <variation>N</variation>
    <location>
        <position position="29"/>
    </location>
</feature>
<feature type="sequence conflict" description="In Ref. 1; BAA08937." evidence="1" ref="1">
    <original>F</original>
    <variation>V</variation>
    <location>
        <position position="36"/>
    </location>
</feature>
<feature type="sequence conflict" description="In Ref. 1; BAA08937." evidence="1" ref="1">
    <original>L</original>
    <variation>P</variation>
    <location>
        <position position="39"/>
    </location>
</feature>
<feature type="sequence conflict" description="In Ref. 1; BAA08937." evidence="1" ref="1">
    <original>A</original>
    <variation>S</variation>
    <location>
        <position position="56"/>
    </location>
</feature>
<feature type="sequence conflict" description="In Ref. 1; BAA08937." evidence="1" ref="1">
    <original>V</original>
    <variation>C</variation>
    <location>
        <position position="103"/>
    </location>
</feature>
<accession>P55909</accession>
<keyword id="KW-1185">Reference proteome</keyword>